<comment type="function">
    <text evidence="1">Nuclear serine protease which mediates apoptosis.</text>
</comment>
<comment type="subcellular location">
    <subcellularLocation>
        <location evidence="1">Nucleus</location>
    </subcellularLocation>
</comment>
<comment type="similarity">
    <text evidence="4">Belongs to the peptidase S1C family.</text>
</comment>
<organism>
    <name type="scientific">Phaeosphaeria nodorum (strain SN15 / ATCC MYA-4574 / FGSC 10173)</name>
    <name type="common">Glume blotch fungus</name>
    <name type="synonym">Parastagonospora nodorum</name>
    <dbReference type="NCBI Taxonomy" id="321614"/>
    <lineage>
        <taxon>Eukaryota</taxon>
        <taxon>Fungi</taxon>
        <taxon>Dikarya</taxon>
        <taxon>Ascomycota</taxon>
        <taxon>Pezizomycotina</taxon>
        <taxon>Dothideomycetes</taxon>
        <taxon>Pleosporomycetidae</taxon>
        <taxon>Pleosporales</taxon>
        <taxon>Pleosporineae</taxon>
        <taxon>Phaeosphaeriaceae</taxon>
        <taxon>Parastagonospora</taxon>
    </lineage>
</organism>
<dbReference type="EC" id="3.4.21.-"/>
<dbReference type="EMBL" id="CH445328">
    <property type="protein sequence ID" value="EAT90025.2"/>
    <property type="molecule type" value="Genomic_DNA"/>
</dbReference>
<dbReference type="RefSeq" id="XP_001793864.1">
    <property type="nucleotide sequence ID" value="XM_001793812.1"/>
</dbReference>
<dbReference type="SMR" id="Q0UY70"/>
<dbReference type="FunCoup" id="Q0UY70">
    <property type="interactions" value="125"/>
</dbReference>
<dbReference type="STRING" id="321614.Q0UY70"/>
<dbReference type="MEROPS" id="S01.434"/>
<dbReference type="EnsemblFungi" id="SNOT_03294">
    <property type="protein sequence ID" value="SNOT_03294"/>
    <property type="gene ID" value="SNOG_03294"/>
</dbReference>
<dbReference type="GeneID" id="5970721"/>
<dbReference type="KEGG" id="pno:SNOG_03294"/>
<dbReference type="VEuPathDB" id="FungiDB:JI435_032940"/>
<dbReference type="eggNOG" id="KOG1421">
    <property type="taxonomic scope" value="Eukaryota"/>
</dbReference>
<dbReference type="HOGENOM" id="CLU_003212_0_0_1"/>
<dbReference type="InParanoid" id="Q0UY70"/>
<dbReference type="Proteomes" id="UP000001055">
    <property type="component" value="Unassembled WGS sequence"/>
</dbReference>
<dbReference type="GO" id="GO:0005634">
    <property type="term" value="C:nucleus"/>
    <property type="evidence" value="ECO:0000318"/>
    <property type="project" value="GO_Central"/>
</dbReference>
<dbReference type="GO" id="GO:0004252">
    <property type="term" value="F:serine-type endopeptidase activity"/>
    <property type="evidence" value="ECO:0000318"/>
    <property type="project" value="GO_Central"/>
</dbReference>
<dbReference type="GO" id="GO:0006915">
    <property type="term" value="P:apoptotic process"/>
    <property type="evidence" value="ECO:0007669"/>
    <property type="project" value="UniProtKB-KW"/>
</dbReference>
<dbReference type="GO" id="GO:0043065">
    <property type="term" value="P:positive regulation of apoptotic process"/>
    <property type="evidence" value="ECO:0000318"/>
    <property type="project" value="GO_Central"/>
</dbReference>
<dbReference type="GO" id="GO:0006508">
    <property type="term" value="P:proteolysis"/>
    <property type="evidence" value="ECO:0007669"/>
    <property type="project" value="UniProtKB-KW"/>
</dbReference>
<dbReference type="CDD" id="cd06786">
    <property type="entry name" value="cpPDZ1_ScNma111-like"/>
    <property type="match status" value="1"/>
</dbReference>
<dbReference type="CDD" id="cd06719">
    <property type="entry name" value="PDZ2-4_Nma111p-like"/>
    <property type="match status" value="2"/>
</dbReference>
<dbReference type="Gene3D" id="2.30.42.10">
    <property type="match status" value="1"/>
</dbReference>
<dbReference type="Gene3D" id="2.40.10.120">
    <property type="match status" value="1"/>
</dbReference>
<dbReference type="InterPro" id="IPR001478">
    <property type="entry name" value="PDZ"/>
</dbReference>
<dbReference type="InterPro" id="IPR025926">
    <property type="entry name" value="PDZ-like_dom"/>
</dbReference>
<dbReference type="InterPro" id="IPR036034">
    <property type="entry name" value="PDZ_sf"/>
</dbReference>
<dbReference type="InterPro" id="IPR009003">
    <property type="entry name" value="Peptidase_S1_PA"/>
</dbReference>
<dbReference type="InterPro" id="IPR001940">
    <property type="entry name" value="Peptidase_S1C"/>
</dbReference>
<dbReference type="PANTHER" id="PTHR46366">
    <property type="entry name" value="PRO-APOPTOTIC SERINE PROTEASE NMA111"/>
    <property type="match status" value="1"/>
</dbReference>
<dbReference type="PANTHER" id="PTHR46366:SF8">
    <property type="entry name" value="PRO-APOPTOTIC SERINE PROTEASE NMA111"/>
    <property type="match status" value="1"/>
</dbReference>
<dbReference type="Pfam" id="PF00595">
    <property type="entry name" value="PDZ"/>
    <property type="match status" value="1"/>
</dbReference>
<dbReference type="Pfam" id="PF12812">
    <property type="entry name" value="PDZ_1"/>
    <property type="match status" value="2"/>
</dbReference>
<dbReference type="Pfam" id="PF13365">
    <property type="entry name" value="Trypsin_2"/>
    <property type="match status" value="1"/>
</dbReference>
<dbReference type="PRINTS" id="PR00834">
    <property type="entry name" value="PROTEASES2C"/>
</dbReference>
<dbReference type="SMART" id="SM00228">
    <property type="entry name" value="PDZ"/>
    <property type="match status" value="2"/>
</dbReference>
<dbReference type="SUPFAM" id="SSF50156">
    <property type="entry name" value="PDZ domain-like"/>
    <property type="match status" value="3"/>
</dbReference>
<dbReference type="SUPFAM" id="SSF50494">
    <property type="entry name" value="Trypsin-like serine proteases"/>
    <property type="match status" value="2"/>
</dbReference>
<keyword id="KW-0053">Apoptosis</keyword>
<keyword id="KW-0378">Hydrolase</keyword>
<keyword id="KW-0539">Nucleus</keyword>
<keyword id="KW-0645">Protease</keyword>
<keyword id="KW-0677">Repeat</keyword>
<keyword id="KW-0720">Serine protease</keyword>
<proteinExistence type="inferred from homology"/>
<sequence>MDQNGASTEARSKRKQPPTSPSTDRPLKQIKPEVDAHTRNGVPKSPELEVVDDAHSVYSLEEPIAPVAGAVHDTAEWQKTIEGVVKSVVSIHFCQTCSFDTDPAISSEATGFVVDAEKGYILTNRHVVGAGPFIGYCIFDNHEECDVYPVYRDPVHDFGILRFDPKAIKYMSVSALQLRPDFAKVGVEIRVVGNDAGEKLSILSGVISRLDRNAPEYGEGYSDFNTNYIQAAAAASGGSSGSPVVNRDGFAVALQAGGRADGAATDYFLPLDRPLRALELVRRGEAVTRGTVQTQWILKPFDECRRLGLSTDLEKAVRTQFPKETGMLVAEVVLPQGPASTKVEEGDILIKVNGEFITQFVRLDSILDDNVGKTISVTIQRAGENLEVELDVGNLHDITPDRFVSVSGASFHDLSYQQARLYAISLKNAGVFVCEAAGSFRFADGYASGWLIQEVDNQPTPNLDTFIEVMKKIPDRKRIVIQYKHLRDLHTANTSITAVDRHWHAKIRIATRNDKTGLWDFKPIADPVPAVPQVSRRANFVKMSSNYPNAVDIVRSFVRVHVSMPIKLDGFPKMNKQGYGLVVDAEQGLVLVSRAILPYDLCDISLIIADSIFIDAKVVFMHPLQNYVIVKYDPALVNAPVKTPKFATEFIRKGDETIFFGLNQNFRPVVAKTVVTDITTVAIPASAITPRYRATNFDAITVDTNQASHSGSGVLIAEDGTVQALWLSYLGERTSHSGKDVEYHLGLATPNLLPILNEIKSGKTPKLRILNVEFQTVQMSQARVMGVSEDWIEKTEQADPERHQLFMVRKVDSGHGGDGMLEGDILLTLNGKLVTRSPDLDVMYNNEFLEAVIVRKREEKTIKVTTVATEEIETDRMVSFCGATLHRPHQAVRQQISKIHSDVYISSRARGSPAYMYGLAPTNFLTHVNNIPTPDLSTFLREVKKIGDNEYFRLKVMTFDNVPWVATMKKNEHYFPTIEYVKDDTEALGWKRIIHECEDGGAREEMAIDNEAGGDEE</sequence>
<evidence type="ECO:0000250" key="1"/>
<evidence type="ECO:0000255" key="2"/>
<evidence type="ECO:0000256" key="3">
    <source>
        <dbReference type="SAM" id="MobiDB-lite"/>
    </source>
</evidence>
<evidence type="ECO:0000305" key="4"/>
<gene>
    <name type="primary">NMA111</name>
    <name type="ORF">SNOG_03294</name>
</gene>
<accession>Q0UY70</accession>
<feature type="chain" id="PRO_0000320358" description="Pro-apoptotic serine protease NMA111">
    <location>
        <begin position="1"/>
        <end position="1017"/>
    </location>
</feature>
<feature type="domain" description="PDZ 1">
    <location>
        <begin position="305"/>
        <end position="383"/>
    </location>
</feature>
<feature type="domain" description="PDZ 2">
    <location>
        <begin position="879"/>
        <end position="960"/>
    </location>
</feature>
<feature type="region of interest" description="Disordered" evidence="3">
    <location>
        <begin position="1"/>
        <end position="46"/>
    </location>
</feature>
<feature type="region of interest" description="Serine protease">
    <location>
        <begin position="88"/>
        <end position="278"/>
    </location>
</feature>
<feature type="compositionally biased region" description="Basic and acidic residues" evidence="3">
    <location>
        <begin position="25"/>
        <end position="38"/>
    </location>
</feature>
<feature type="active site" description="Charge relay system" evidence="2">
    <location>
        <position position="126"/>
    </location>
</feature>
<feature type="active site" description="Charge relay system" evidence="2">
    <location>
        <position position="157"/>
    </location>
</feature>
<feature type="active site" description="Charge relay system" evidence="2">
    <location>
        <position position="239"/>
    </location>
</feature>
<name>NM111_PHANO</name>
<reference key="1">
    <citation type="journal article" date="2007" name="Plant Cell">
        <title>Dothideomycete-plant interactions illuminated by genome sequencing and EST analysis of the wheat pathogen Stagonospora nodorum.</title>
        <authorList>
            <person name="Hane J.K."/>
            <person name="Lowe R.G.T."/>
            <person name="Solomon P.S."/>
            <person name="Tan K.-C."/>
            <person name="Schoch C.L."/>
            <person name="Spatafora J.W."/>
            <person name="Crous P.W."/>
            <person name="Kodira C.D."/>
            <person name="Birren B.W."/>
            <person name="Galagan J.E."/>
            <person name="Torriani S.F.F."/>
            <person name="McDonald B.A."/>
            <person name="Oliver R.P."/>
        </authorList>
    </citation>
    <scope>NUCLEOTIDE SEQUENCE [LARGE SCALE GENOMIC DNA]</scope>
    <source>
        <strain>SN15 / ATCC MYA-4574 / FGSC 10173</strain>
    </source>
</reference>
<protein>
    <recommendedName>
        <fullName>Pro-apoptotic serine protease NMA111</fullName>
        <ecNumber>3.4.21.-</ecNumber>
    </recommendedName>
</protein>